<dbReference type="EMBL" id="AB094093">
    <property type="protein sequence ID" value="BAC76047.1"/>
    <property type="molecule type" value="mRNA"/>
</dbReference>
<dbReference type="EMBL" id="BC126469">
    <property type="protein sequence ID" value="AAI26470.1"/>
    <property type="molecule type" value="mRNA"/>
</dbReference>
<dbReference type="EMBL" id="BC126471">
    <property type="protein sequence ID" value="AAI26472.1"/>
    <property type="molecule type" value="mRNA"/>
</dbReference>
<dbReference type="CCDS" id="CCDS8405.1"/>
<dbReference type="RefSeq" id="NP_940891.1">
    <property type="nucleotide sequence ID" value="NM_198489.3"/>
</dbReference>
<dbReference type="PDB" id="8Y6O">
    <property type="method" value="EM"/>
    <property type="resolution" value="3.38 A"/>
    <property type="chains" value="R=1-332"/>
</dbReference>
<dbReference type="PDBsum" id="8Y6O"/>
<dbReference type="EMDB" id="EMD-38993"/>
<dbReference type="SMR" id="Q86UT8"/>
<dbReference type="BioGRID" id="130775">
    <property type="interactions" value="49"/>
</dbReference>
<dbReference type="FunCoup" id="Q86UT8">
    <property type="interactions" value="429"/>
</dbReference>
<dbReference type="IntAct" id="Q86UT8">
    <property type="interactions" value="25"/>
</dbReference>
<dbReference type="STRING" id="9606.ENSP00000334767"/>
<dbReference type="GlyGen" id="Q86UT8">
    <property type="glycosylation" value="1 site, 1 O-linked glycan (1 site)"/>
</dbReference>
<dbReference type="iPTMnet" id="Q86UT8"/>
<dbReference type="PhosphoSitePlus" id="Q86UT8"/>
<dbReference type="BioMuta" id="CCDC84"/>
<dbReference type="DMDM" id="74714025"/>
<dbReference type="jPOST" id="Q86UT8"/>
<dbReference type="MassIVE" id="Q86UT8"/>
<dbReference type="PaxDb" id="9606-ENSP00000334767"/>
<dbReference type="PeptideAtlas" id="Q86UT8"/>
<dbReference type="ProteomicsDB" id="69889"/>
<dbReference type="Pumba" id="Q86UT8"/>
<dbReference type="Antibodypedia" id="54439">
    <property type="antibodies" value="80 antibodies from 16 providers"/>
</dbReference>
<dbReference type="DNASU" id="338657"/>
<dbReference type="Ensembl" id="ENST00000334418.6">
    <property type="protein sequence ID" value="ENSP00000334767.1"/>
    <property type="gene ID" value="ENSG00000186166.9"/>
</dbReference>
<dbReference type="Ensembl" id="ENST00000625528.3">
    <property type="protein sequence ID" value="ENSP00000487197.1"/>
    <property type="gene ID" value="ENSG00000280975.3"/>
</dbReference>
<dbReference type="GeneID" id="338657"/>
<dbReference type="KEGG" id="hsa:338657"/>
<dbReference type="MANE-Select" id="ENST00000334418.6">
    <property type="protein sequence ID" value="ENSP00000334767.1"/>
    <property type="RefSeq nucleotide sequence ID" value="NM_198489.3"/>
    <property type="RefSeq protein sequence ID" value="NP_940891.1"/>
</dbReference>
<dbReference type="UCSC" id="uc001pul.5">
    <property type="organism name" value="human"/>
</dbReference>
<dbReference type="AGR" id="HGNC:30460"/>
<dbReference type="CTD" id="338657"/>
<dbReference type="GeneCards" id="CENATAC"/>
<dbReference type="HGNC" id="HGNC:30460">
    <property type="gene designation" value="CENATAC"/>
</dbReference>
<dbReference type="HPA" id="ENSG00000186166">
    <property type="expression patterns" value="Low tissue specificity"/>
</dbReference>
<dbReference type="MalaCards" id="CENATAC"/>
<dbReference type="MIM" id="620142">
    <property type="type" value="gene"/>
</dbReference>
<dbReference type="MIM" id="620153">
    <property type="type" value="phenotype"/>
</dbReference>
<dbReference type="neXtProt" id="NX_Q86UT8"/>
<dbReference type="OpenTargets" id="ENSG00000186166"/>
<dbReference type="VEuPathDB" id="HostDB:ENSG00000186166"/>
<dbReference type="eggNOG" id="ENOG502QS8B">
    <property type="taxonomic scope" value="Eukaryota"/>
</dbReference>
<dbReference type="GeneTree" id="ENSGT00390000007799"/>
<dbReference type="HOGENOM" id="CLU_041370_1_0_1"/>
<dbReference type="InParanoid" id="Q86UT8"/>
<dbReference type="OMA" id="MIQDEYT"/>
<dbReference type="OrthoDB" id="1892805at2759"/>
<dbReference type="PAN-GO" id="Q86UT8">
    <property type="GO annotations" value="0 GO annotations based on evolutionary models"/>
</dbReference>
<dbReference type="PhylomeDB" id="Q86UT8"/>
<dbReference type="TreeFam" id="TF324670"/>
<dbReference type="PathwayCommons" id="Q86UT8"/>
<dbReference type="SignaLink" id="Q86UT8"/>
<dbReference type="BioGRID-ORCS" id="338657">
    <property type="hits" value="637 hits in 1172 CRISPR screens"/>
</dbReference>
<dbReference type="ChiTaRS" id="CCDC84">
    <property type="organism name" value="human"/>
</dbReference>
<dbReference type="GenomeRNAi" id="338657"/>
<dbReference type="Pharos" id="Q86UT8">
    <property type="development level" value="Tdark"/>
</dbReference>
<dbReference type="PRO" id="PR:Q86UT8"/>
<dbReference type="Proteomes" id="UP000005640">
    <property type="component" value="Chromosome 11"/>
</dbReference>
<dbReference type="RNAct" id="Q86UT8">
    <property type="molecule type" value="protein"/>
</dbReference>
<dbReference type="Bgee" id="ENSG00000186166">
    <property type="expression patterns" value="Expressed in cerebellar cortex and 95 other cell types or tissues"/>
</dbReference>
<dbReference type="ExpressionAtlas" id="Q86UT8">
    <property type="expression patterns" value="baseline and differential"/>
</dbReference>
<dbReference type="GO" id="GO:0005813">
    <property type="term" value="C:centrosome"/>
    <property type="evidence" value="ECO:0000314"/>
    <property type="project" value="UniProtKB"/>
</dbReference>
<dbReference type="GO" id="GO:0005737">
    <property type="term" value="C:cytoplasm"/>
    <property type="evidence" value="ECO:0007669"/>
    <property type="project" value="UniProtKB-KW"/>
</dbReference>
<dbReference type="GO" id="GO:0051304">
    <property type="term" value="P:chromosome separation"/>
    <property type="evidence" value="ECO:0000315"/>
    <property type="project" value="UniProtKB"/>
</dbReference>
<dbReference type="GO" id="GO:0000398">
    <property type="term" value="P:mRNA splicing, via spliceosome"/>
    <property type="evidence" value="ECO:0000315"/>
    <property type="project" value="UniProtKB"/>
</dbReference>
<dbReference type="GO" id="GO:0010826">
    <property type="term" value="P:negative regulation of centrosome duplication"/>
    <property type="evidence" value="ECO:0000314"/>
    <property type="project" value="UniProtKB"/>
</dbReference>
<dbReference type="GO" id="GO:0042176">
    <property type="term" value="P:regulation of protein catabolic process"/>
    <property type="evidence" value="ECO:0000315"/>
    <property type="project" value="UniProtKB"/>
</dbReference>
<dbReference type="InterPro" id="IPR028015">
    <property type="entry name" value="CCDC84-like"/>
</dbReference>
<dbReference type="PANTHER" id="PTHR31198:SF1">
    <property type="entry name" value="CENTROSOMAL AT-AC SPLICING FACTOR"/>
    <property type="match status" value="1"/>
</dbReference>
<dbReference type="PANTHER" id="PTHR31198">
    <property type="entry name" value="COILED-COIL DOMAIN-CONTAINING PROTEIN 84"/>
    <property type="match status" value="1"/>
</dbReference>
<dbReference type="Pfam" id="PF14968">
    <property type="entry name" value="CCDC84"/>
    <property type="match status" value="1"/>
</dbReference>
<gene>
    <name evidence="6" type="primary">CENATAC</name>
    <name type="ORF">CCDC84</name>
    <name type="ORF">DLNB14</name>
</gene>
<keyword id="KW-0002">3D-structure</keyword>
<keyword id="KW-0007">Acetylation</keyword>
<keyword id="KW-0175">Coiled coil</keyword>
<keyword id="KW-0963">Cytoplasm</keyword>
<keyword id="KW-0206">Cytoskeleton</keyword>
<keyword id="KW-0507">mRNA processing</keyword>
<keyword id="KW-0508">mRNA splicing</keyword>
<keyword id="KW-1267">Proteomics identification</keyword>
<keyword id="KW-1185">Reference proteome</keyword>
<feature type="chain" id="PRO_0000271022" description="Centrosomal AT-AC splicing factor">
    <location>
        <begin position="1"/>
        <end position="332"/>
    </location>
</feature>
<feature type="region of interest" description="Required for centrosome location" evidence="3">
    <location>
        <begin position="1"/>
        <end position="169"/>
    </location>
</feature>
<feature type="region of interest" description="Disordered" evidence="2">
    <location>
        <begin position="169"/>
        <end position="213"/>
    </location>
</feature>
<feature type="coiled-coil region" evidence="1">
    <location>
        <begin position="137"/>
        <end position="168"/>
    </location>
</feature>
<feature type="compositionally biased region" description="Polar residues" evidence="2">
    <location>
        <begin position="190"/>
        <end position="204"/>
    </location>
</feature>
<feature type="modified residue" description="N6-acetyllysine; by NAT10" evidence="3">
    <location>
        <position position="31"/>
    </location>
</feature>
<feature type="sequence variant" id="VAR_029848" description="In dbSNP:rs600648.">
    <original>W</original>
    <variation>G</variation>
    <location>
        <position position="244"/>
    </location>
</feature>
<feature type="mutagenesis site" description="Increases interaction with SASS6." evidence="3">
    <original>K</original>
    <variation>Q</variation>
    <location>
        <position position="31"/>
    </location>
</feature>
<feature type="mutagenesis site" description="Strongly reduces acetylation. No effect on interaction with SASS6." evidence="3">
    <original>K</original>
    <variation>R</variation>
    <location>
        <position position="31"/>
    </location>
</feature>
<organism>
    <name type="scientific">Homo sapiens</name>
    <name type="common">Human</name>
    <dbReference type="NCBI Taxonomy" id="9606"/>
    <lineage>
        <taxon>Eukaryota</taxon>
        <taxon>Metazoa</taxon>
        <taxon>Chordata</taxon>
        <taxon>Craniata</taxon>
        <taxon>Vertebrata</taxon>
        <taxon>Euteleostomi</taxon>
        <taxon>Mammalia</taxon>
        <taxon>Eutheria</taxon>
        <taxon>Euarchontoglires</taxon>
        <taxon>Primates</taxon>
        <taxon>Haplorrhini</taxon>
        <taxon>Catarrhini</taxon>
        <taxon>Hominidae</taxon>
        <taxon>Homo</taxon>
    </lineage>
</organism>
<comment type="function">
    <text evidence="3 4">Component of the minor spliceosome that promotes splicing of a specific, rare minor intron subtype (PubMed:34009673). Negative regulator of centrosome duplication (PubMed:31722219). Constrains centriole number by modulating the degradation of the centrosome-duplication-associated protein SASS6 in an acetylation-dependent manner. SIRT1 deacetylates CENATAC in G1 phase, allowing for SASS6 accumulation on the centrosome and subsequent procentriole assembly. The CENATAC acetylation level is restored in mitosis by NAT10, promoting SASS6 proteasome degradation by facilitating SASS6 binding to APC/C E3 ubiquitin-protein ligase complex/FZR1 (PubMed:31722219).</text>
</comment>
<comment type="subunit">
    <text evidence="3">Interacts with SASS6; the interaction increases with CENATAC acetylation.</text>
</comment>
<comment type="interaction">
    <interactant intactId="EBI-11028020">
        <id>Q86UT8</id>
    </interactant>
    <interactant intactId="EBI-6165891">
        <id>Q14696</id>
        <label>MESD</label>
    </interactant>
    <organismsDiffer>false</organismsDiffer>
    <experiments>3</experiments>
</comment>
<comment type="interaction">
    <interactant intactId="EBI-11028020">
        <id>Q86UT8</id>
    </interactant>
    <interactant intactId="EBI-720441">
        <id>Q96DV4</id>
        <label>MRPL38</label>
    </interactant>
    <organismsDiffer>false</organismsDiffer>
    <experiments>3</experiments>
</comment>
<comment type="interaction">
    <interactant intactId="EBI-11028020">
        <id>Q86UT8</id>
    </interactant>
    <interactant intactId="EBI-10249760">
        <id>Q9UHB4</id>
        <label>NDOR1</label>
    </interactant>
    <organismsDiffer>false</organismsDiffer>
    <experiments>3</experiments>
</comment>
<comment type="interaction">
    <interactant intactId="EBI-11028020">
        <id>Q86UT8</id>
    </interactant>
    <interactant intactId="EBI-751051">
        <id>Q9H2H8</id>
        <label>PPIL3</label>
    </interactant>
    <organismsDiffer>false</organismsDiffer>
    <experiments>3</experiments>
</comment>
<comment type="interaction">
    <interactant intactId="EBI-11028020">
        <id>Q86UT8</id>
    </interactant>
    <interactant intactId="EBI-10309345">
        <id>Q9NX01</id>
        <label>TXNL4B</label>
    </interactant>
    <organismsDiffer>false</organismsDiffer>
    <experiments>9</experiments>
</comment>
<comment type="interaction">
    <interactant intactId="EBI-11028020">
        <id>Q86UT8</id>
    </interactant>
    <interactant intactId="EBI-10265237">
        <id>Q8NC26</id>
        <label>ZNF114</label>
    </interactant>
    <organismsDiffer>false</organismsDiffer>
    <experiments>3</experiments>
</comment>
<comment type="subcellular location">
    <subcellularLocation>
        <location evidence="3">Cytoplasm</location>
        <location evidence="3">Cytoskeleton</location>
        <location evidence="3">Microtubule organizing center</location>
        <location evidence="3">Centrosome</location>
    </subcellularLocation>
    <text evidence="3">Localizes to the proximal end of the mother centriole. During the cell cycle, from G1 to metaphase, gradually accumulates on the centrosome and then decreased significantly upon entry into anaphase.</text>
</comment>
<comment type="PTM">
    <text evidence="3">Acetylated. Acetylation oscillates throughout the cell cycle, and the acetylation state at Lys-31 is regulated by the deacetylase SIRT1 and the acetyltransferase NAT10. Deacetylated CENATAC is responsible for its centrosome targeting, and acetylated CENATAC promotes SASS6 degradation by enhancing the binding affinity of SASS6 for APC/C E3 ubiquitin-protein ligase complex/FZR1.</text>
</comment>
<comment type="disease" evidence="4">
    <disease id="DI-06560">
        <name>Mosaic variegated aneuploidy syndrome 4</name>
        <acronym>MVA4</acronym>
        <description>A form of mosaic variegated aneuploidy syndrome, a severe disorder characterized by mosaic aneuploidies, predominantly trisomies and monosomies, involving multiple different chromosomes and tissues. Affected individuals typically present with severe intrauterine growth retardation and microcephaly. Eye anomalies, mild dysmorphism, variable developmental delay, and a broad spectrum of additional congenital abnormalities and medical conditions may also occur. The risk of malignancy is high, with rhabdomyosarcoma, Wilms tumor and leukemia reported in several cases. MVA4 inheritance is autosomal recessive.</description>
        <dbReference type="MIM" id="620153"/>
    </disease>
    <text>The disease is caused by variants affecting the gene represented in this entry.</text>
</comment>
<name>CATAC_HUMAN</name>
<accession>Q86UT8</accession>
<proteinExistence type="evidence at protein level"/>
<reference key="1">
    <citation type="submission" date="2002-10" db="EMBL/GenBank/DDBJ databases">
        <title>Identification of a 500-kb region of common allelic loss in chromosome 11q23 in non-MYCN amplified type of neuroblastoma.</title>
        <authorList>
            <person name="Kubo T."/>
            <person name="Arai Y."/>
            <person name="Ohira M."/>
            <person name="Gamou T."/>
            <person name="Maeno G."/>
            <person name="Sakiyama T."/>
            <person name="Toyoda A."/>
            <person name="Hattori M."/>
            <person name="Sakaki Y."/>
            <person name="Nakagawara A."/>
            <person name="Ohki M."/>
        </authorList>
    </citation>
    <scope>NUCLEOTIDE SEQUENCE [MRNA]</scope>
</reference>
<reference key="2">
    <citation type="journal article" date="2004" name="Genome Res.">
        <title>The status, quality, and expansion of the NIH full-length cDNA project: the Mammalian Gene Collection (MGC).</title>
        <authorList>
            <consortium name="The MGC Project Team"/>
        </authorList>
    </citation>
    <scope>NUCLEOTIDE SEQUENCE [LARGE SCALE MRNA]</scope>
    <source>
        <tissue>Brain</tissue>
    </source>
</reference>
<reference key="3">
    <citation type="journal article" date="2014" name="Mol. Cell. Proteomics">
        <title>Immunoaffinity enrichment and mass spectrometry analysis of protein methylation.</title>
        <authorList>
            <person name="Guo A."/>
            <person name="Gu H."/>
            <person name="Zhou J."/>
            <person name="Mulhern D."/>
            <person name="Wang Y."/>
            <person name="Lee K.A."/>
            <person name="Yang V."/>
            <person name="Aguiar M."/>
            <person name="Kornhauser J."/>
            <person name="Jia X."/>
            <person name="Ren J."/>
            <person name="Beausoleil S.A."/>
            <person name="Silva J.C."/>
            <person name="Vemulapalli V."/>
            <person name="Bedford M.T."/>
            <person name="Comb M.J."/>
        </authorList>
    </citation>
    <scope>IDENTIFICATION BY MASS SPECTROMETRY [LARGE SCALE ANALYSIS]</scope>
    <source>
        <tissue>Colon carcinoma</tissue>
    </source>
</reference>
<reference key="4">
    <citation type="journal article" date="2019" name="Cell Rep.">
        <title>CCDC84 Acetylation Oscillation Regulates Centrosome Duplication by Modulating HsSAS-6 Degradation.</title>
        <authorList>
            <person name="Wang T."/>
            <person name="Zou Y."/>
            <person name="Huang N."/>
            <person name="Teng J."/>
            <person name="Chen J."/>
        </authorList>
    </citation>
    <scope>FUNCTION</scope>
    <scope>SUBCELLULAR LOCATION</scope>
    <scope>ACETYLATION AT LYS-31</scope>
    <scope>INTERACTION WITH SASS6</scope>
    <scope>MUTAGENESIS OF LYS-31</scope>
</reference>
<reference key="5">
    <citation type="journal article" date="2021" name="EMBO J.">
        <title>Chromosomal instability by mutations in the novel minor spliceosome component CENATAC.</title>
        <authorList>
            <person name="de Wolf B."/>
            <person name="Oghabian A."/>
            <person name="Akinyi M.V."/>
            <person name="Hanks S."/>
            <person name="Tromer E.C."/>
            <person name="van Hooff J.J.E."/>
            <person name="van Voorthuijsen L."/>
            <person name="van Rooijen L.E."/>
            <person name="Verbeeren J."/>
            <person name="Uijttewaal E.C.H."/>
            <person name="Baltissen M.P.A."/>
            <person name="Yost S."/>
            <person name="Piloquet P."/>
            <person name="Vermeulen M."/>
            <person name="Snel B."/>
            <person name="Isidor B."/>
            <person name="Rahman N."/>
            <person name="Frilander M.J."/>
            <person name="Kops G.J.P.L."/>
        </authorList>
    </citation>
    <scope>INVOLVEMENT IN MVA4</scope>
    <scope>FUNCTION</scope>
</reference>
<evidence type="ECO:0000255" key="1"/>
<evidence type="ECO:0000256" key="2">
    <source>
        <dbReference type="SAM" id="MobiDB-lite"/>
    </source>
</evidence>
<evidence type="ECO:0000269" key="3">
    <source>
    </source>
</evidence>
<evidence type="ECO:0000269" key="4">
    <source>
    </source>
</evidence>
<evidence type="ECO:0000305" key="5"/>
<evidence type="ECO:0000312" key="6">
    <source>
        <dbReference type="HGNC" id="HGNC:30460"/>
    </source>
</evidence>
<protein>
    <recommendedName>
        <fullName evidence="5">Centrosomal AT-AC splicing factor</fullName>
    </recommendedName>
    <alternativeName>
        <fullName>Coiled-coil domain-containing protein 84</fullName>
    </alternativeName>
</protein>
<sequence>MAPAQRCPLCRQTFFCGRGHVYSRKHQRQLKEALERLLPQVEAARKAIRAAQVERYVPEHERCCWCLCCGCEVREHLSHGNLTVLYGGLLEHLASPEHKKATNKFWWENKAEVQMKEKFLVTPQDYARFKKSMVKGLDSYEEKEDKVIKEMAAQIREVEQSRQEVVRSVLEPQAVPDPEEGSSAPRSWKGMNSQVASSLQQPSNLDLPPAPELDWMETGPSLTFIGHQDIPGVGNIHSGATPPWMIQDEEYIAGNQEIGPSYEEFLKEKEKQKLKKLPPDRVGANFDHSSRTSAGWLPSFGRVWNNGRRWQSRHQFKTEAAAMKKQSHTEKS</sequence>